<reference key="1">
    <citation type="journal article" date="2003" name="Gene">
        <title>SF4 and SFRS14, two related putative splicing factors on human chromosome 19p13.11.</title>
        <authorList>
            <person name="Sampson N.D."/>
            <person name="Hewitt J.E."/>
        </authorList>
    </citation>
    <scope>NUCLEOTIDE SEQUENCE [MRNA]</scope>
    <source>
        <strain>C57BL/6J</strain>
    </source>
</reference>
<reference key="2">
    <citation type="journal article" date="2005" name="Science">
        <title>The transcriptional landscape of the mammalian genome.</title>
        <authorList>
            <person name="Carninci P."/>
            <person name="Kasukawa T."/>
            <person name="Katayama S."/>
            <person name="Gough J."/>
            <person name="Frith M.C."/>
            <person name="Maeda N."/>
            <person name="Oyama R."/>
            <person name="Ravasi T."/>
            <person name="Lenhard B."/>
            <person name="Wells C."/>
            <person name="Kodzius R."/>
            <person name="Shimokawa K."/>
            <person name="Bajic V.B."/>
            <person name="Brenner S.E."/>
            <person name="Batalov S."/>
            <person name="Forrest A.R."/>
            <person name="Zavolan M."/>
            <person name="Davis M.J."/>
            <person name="Wilming L.G."/>
            <person name="Aidinis V."/>
            <person name="Allen J.E."/>
            <person name="Ambesi-Impiombato A."/>
            <person name="Apweiler R."/>
            <person name="Aturaliya R.N."/>
            <person name="Bailey T.L."/>
            <person name="Bansal M."/>
            <person name="Baxter L."/>
            <person name="Beisel K.W."/>
            <person name="Bersano T."/>
            <person name="Bono H."/>
            <person name="Chalk A.M."/>
            <person name="Chiu K.P."/>
            <person name="Choudhary V."/>
            <person name="Christoffels A."/>
            <person name="Clutterbuck D.R."/>
            <person name="Crowe M.L."/>
            <person name="Dalla E."/>
            <person name="Dalrymple B.P."/>
            <person name="de Bono B."/>
            <person name="Della Gatta G."/>
            <person name="di Bernardo D."/>
            <person name="Down T."/>
            <person name="Engstrom P."/>
            <person name="Fagiolini M."/>
            <person name="Faulkner G."/>
            <person name="Fletcher C.F."/>
            <person name="Fukushima T."/>
            <person name="Furuno M."/>
            <person name="Futaki S."/>
            <person name="Gariboldi M."/>
            <person name="Georgii-Hemming P."/>
            <person name="Gingeras T.R."/>
            <person name="Gojobori T."/>
            <person name="Green R.E."/>
            <person name="Gustincich S."/>
            <person name="Harbers M."/>
            <person name="Hayashi Y."/>
            <person name="Hensch T.K."/>
            <person name="Hirokawa N."/>
            <person name="Hill D."/>
            <person name="Huminiecki L."/>
            <person name="Iacono M."/>
            <person name="Ikeo K."/>
            <person name="Iwama A."/>
            <person name="Ishikawa T."/>
            <person name="Jakt M."/>
            <person name="Kanapin A."/>
            <person name="Katoh M."/>
            <person name="Kawasawa Y."/>
            <person name="Kelso J."/>
            <person name="Kitamura H."/>
            <person name="Kitano H."/>
            <person name="Kollias G."/>
            <person name="Krishnan S.P."/>
            <person name="Kruger A."/>
            <person name="Kummerfeld S.K."/>
            <person name="Kurochkin I.V."/>
            <person name="Lareau L.F."/>
            <person name="Lazarevic D."/>
            <person name="Lipovich L."/>
            <person name="Liu J."/>
            <person name="Liuni S."/>
            <person name="McWilliam S."/>
            <person name="Madan Babu M."/>
            <person name="Madera M."/>
            <person name="Marchionni L."/>
            <person name="Matsuda H."/>
            <person name="Matsuzawa S."/>
            <person name="Miki H."/>
            <person name="Mignone F."/>
            <person name="Miyake S."/>
            <person name="Morris K."/>
            <person name="Mottagui-Tabar S."/>
            <person name="Mulder N."/>
            <person name="Nakano N."/>
            <person name="Nakauchi H."/>
            <person name="Ng P."/>
            <person name="Nilsson R."/>
            <person name="Nishiguchi S."/>
            <person name="Nishikawa S."/>
            <person name="Nori F."/>
            <person name="Ohara O."/>
            <person name="Okazaki Y."/>
            <person name="Orlando V."/>
            <person name="Pang K.C."/>
            <person name="Pavan W.J."/>
            <person name="Pavesi G."/>
            <person name="Pesole G."/>
            <person name="Petrovsky N."/>
            <person name="Piazza S."/>
            <person name="Reed J."/>
            <person name="Reid J.F."/>
            <person name="Ring B.Z."/>
            <person name="Ringwald M."/>
            <person name="Rost B."/>
            <person name="Ruan Y."/>
            <person name="Salzberg S.L."/>
            <person name="Sandelin A."/>
            <person name="Schneider C."/>
            <person name="Schoenbach C."/>
            <person name="Sekiguchi K."/>
            <person name="Semple C.A."/>
            <person name="Seno S."/>
            <person name="Sessa L."/>
            <person name="Sheng Y."/>
            <person name="Shibata Y."/>
            <person name="Shimada H."/>
            <person name="Shimada K."/>
            <person name="Silva D."/>
            <person name="Sinclair B."/>
            <person name="Sperling S."/>
            <person name="Stupka E."/>
            <person name="Sugiura K."/>
            <person name="Sultana R."/>
            <person name="Takenaka Y."/>
            <person name="Taki K."/>
            <person name="Tammoja K."/>
            <person name="Tan S.L."/>
            <person name="Tang S."/>
            <person name="Taylor M.S."/>
            <person name="Tegner J."/>
            <person name="Teichmann S.A."/>
            <person name="Ueda H.R."/>
            <person name="van Nimwegen E."/>
            <person name="Verardo R."/>
            <person name="Wei C.L."/>
            <person name="Yagi K."/>
            <person name="Yamanishi H."/>
            <person name="Zabarovsky E."/>
            <person name="Zhu S."/>
            <person name="Zimmer A."/>
            <person name="Hide W."/>
            <person name="Bult C."/>
            <person name="Grimmond S.M."/>
            <person name="Teasdale R.D."/>
            <person name="Liu E.T."/>
            <person name="Brusic V."/>
            <person name="Quackenbush J."/>
            <person name="Wahlestedt C."/>
            <person name="Mattick J.S."/>
            <person name="Hume D.A."/>
            <person name="Kai C."/>
            <person name="Sasaki D."/>
            <person name="Tomaru Y."/>
            <person name="Fukuda S."/>
            <person name="Kanamori-Katayama M."/>
            <person name="Suzuki M."/>
            <person name="Aoki J."/>
            <person name="Arakawa T."/>
            <person name="Iida J."/>
            <person name="Imamura K."/>
            <person name="Itoh M."/>
            <person name="Kato T."/>
            <person name="Kawaji H."/>
            <person name="Kawagashira N."/>
            <person name="Kawashima T."/>
            <person name="Kojima M."/>
            <person name="Kondo S."/>
            <person name="Konno H."/>
            <person name="Nakano K."/>
            <person name="Ninomiya N."/>
            <person name="Nishio T."/>
            <person name="Okada M."/>
            <person name="Plessy C."/>
            <person name="Shibata K."/>
            <person name="Shiraki T."/>
            <person name="Suzuki S."/>
            <person name="Tagami M."/>
            <person name="Waki K."/>
            <person name="Watahiki A."/>
            <person name="Okamura-Oho Y."/>
            <person name="Suzuki H."/>
            <person name="Kawai J."/>
            <person name="Hayashizaki Y."/>
        </authorList>
    </citation>
    <scope>NUCLEOTIDE SEQUENCE [LARGE SCALE MRNA]</scope>
    <source>
        <strain>NOD</strain>
        <tissue>Spleen</tissue>
    </source>
</reference>
<reference key="3">
    <citation type="journal article" date="2004" name="Genome Res.">
        <title>The status, quality, and expansion of the NIH full-length cDNA project: the Mammalian Gene Collection (MGC).</title>
        <authorList>
            <consortium name="The MGC Project Team"/>
        </authorList>
    </citation>
    <scope>NUCLEOTIDE SEQUENCE [LARGE SCALE MRNA]</scope>
</reference>
<reference key="4">
    <citation type="journal article" date="2007" name="Proc. Natl. Acad. Sci. U.S.A.">
        <title>Large-scale phosphorylation analysis of mouse liver.</title>
        <authorList>
            <person name="Villen J."/>
            <person name="Beausoleil S.A."/>
            <person name="Gerber S.A."/>
            <person name="Gygi S.P."/>
        </authorList>
    </citation>
    <scope>IDENTIFICATION BY MASS SPECTROMETRY [LARGE SCALE ANALYSIS]</scope>
    <source>
        <tissue>Liver</tissue>
    </source>
</reference>
<reference key="5">
    <citation type="journal article" date="2009" name="Immunity">
        <title>The phagosomal proteome in interferon-gamma-activated macrophages.</title>
        <authorList>
            <person name="Trost M."/>
            <person name="English L."/>
            <person name="Lemieux S."/>
            <person name="Courcelles M."/>
            <person name="Desjardins M."/>
            <person name="Thibault P."/>
        </authorList>
    </citation>
    <scope>PHOSPHORYLATION [LARGE SCALE ANALYSIS] AT SER-483</scope>
    <scope>IDENTIFICATION BY MASS SPECTROMETRY [LARGE SCALE ANALYSIS]</scope>
</reference>
<reference key="6">
    <citation type="journal article" date="2010" name="Cell">
        <title>A tissue-specific atlas of mouse protein phosphorylation and expression.</title>
        <authorList>
            <person name="Huttlin E.L."/>
            <person name="Jedrychowski M.P."/>
            <person name="Elias J.E."/>
            <person name="Goswami T."/>
            <person name="Rad R."/>
            <person name="Beausoleil S.A."/>
            <person name="Villen J."/>
            <person name="Haas W."/>
            <person name="Sowa M.E."/>
            <person name="Gygi S.P."/>
        </authorList>
    </citation>
    <scope>PHOSPHORYLATION [LARGE SCALE ANALYSIS] AT SER-407; SER-409 AND SER-483</scope>
    <scope>IDENTIFICATION BY MASS SPECTROMETRY [LARGE SCALE ANALYSIS]</scope>
    <source>
        <tissue>Brain</tissue>
        <tissue>Brown adipose tissue</tissue>
        <tissue>Liver</tissue>
        <tissue>Lung</tissue>
        <tissue>Spleen</tissue>
        <tissue>Testis</tissue>
    </source>
</reference>
<reference key="7">
    <citation type="submission" date="2004-08" db="PDB data bank">
        <title>Solution structure of SURP domain in BAB30904.</title>
        <authorList>
            <consortium name="RIKEN structural genomics initiative (RSGI)"/>
        </authorList>
    </citation>
    <scope>STRUCTURE BY NMR OF 165-239</scope>
</reference>
<reference key="8">
    <citation type="submission" date="2005-11" db="PDB data bank">
        <title>Solution structure of SURP domain in splicing factor 4.</title>
        <authorList>
            <consortium name="RIKEN structural genomics initiative (RSGI)"/>
        </authorList>
    </citation>
    <scope>STRUCTURE BY NMR OF 250-314</scope>
</reference>
<gene>
    <name type="primary">Sugp1</name>
    <name type="synonym">Sf4</name>
</gene>
<organism>
    <name type="scientific">Mus musculus</name>
    <name type="common">Mouse</name>
    <dbReference type="NCBI Taxonomy" id="10090"/>
    <lineage>
        <taxon>Eukaryota</taxon>
        <taxon>Metazoa</taxon>
        <taxon>Chordata</taxon>
        <taxon>Craniata</taxon>
        <taxon>Vertebrata</taxon>
        <taxon>Euteleostomi</taxon>
        <taxon>Mammalia</taxon>
        <taxon>Eutheria</taxon>
        <taxon>Euarchontoglires</taxon>
        <taxon>Glires</taxon>
        <taxon>Rodentia</taxon>
        <taxon>Myomorpha</taxon>
        <taxon>Muroidea</taxon>
        <taxon>Muridae</taxon>
        <taxon>Murinae</taxon>
        <taxon>Mus</taxon>
        <taxon>Mus</taxon>
    </lineage>
</organism>
<protein>
    <recommendedName>
        <fullName>SURP and G-patch domain-containing protein 1</fullName>
    </recommendedName>
    <alternativeName>
        <fullName>Splicing factor 4</fullName>
    </alternativeName>
</protein>
<evidence type="ECO:0000250" key="1"/>
<evidence type="ECO:0000250" key="2">
    <source>
        <dbReference type="UniProtKB" id="Q8IWZ8"/>
    </source>
</evidence>
<evidence type="ECO:0000255" key="3"/>
<evidence type="ECO:0000255" key="4">
    <source>
        <dbReference type="PROSITE-ProRule" id="PRU00092"/>
    </source>
</evidence>
<evidence type="ECO:0000256" key="5">
    <source>
        <dbReference type="SAM" id="MobiDB-lite"/>
    </source>
</evidence>
<evidence type="ECO:0000305" key="6"/>
<evidence type="ECO:0007744" key="7">
    <source>
    </source>
</evidence>
<evidence type="ECO:0007744" key="8">
    <source>
    </source>
</evidence>
<evidence type="ECO:0007829" key="9">
    <source>
        <dbReference type="PDB" id="1UG0"/>
    </source>
</evidence>
<evidence type="ECO:0007829" key="10">
    <source>
        <dbReference type="PDB" id="1X4O"/>
    </source>
</evidence>
<name>SUGP1_MOUSE</name>
<accession>Q8CH02</accession>
<accession>Q0VAT9</accession>
<accession>Q3U0W3</accession>
<accession>Q8R094</accession>
<comment type="function">
    <text evidence="1">Plays a role in pre-mRNA splicing.</text>
</comment>
<comment type="subunit">
    <text evidence="1">Component of the spliceosome.</text>
</comment>
<comment type="subcellular location">
    <subcellularLocation>
        <location evidence="6">Nucleus</location>
    </subcellularLocation>
</comment>
<keyword id="KW-0002">3D-structure</keyword>
<keyword id="KW-0507">mRNA processing</keyword>
<keyword id="KW-0508">mRNA splicing</keyword>
<keyword id="KW-0539">Nucleus</keyword>
<keyword id="KW-0597">Phosphoprotein</keyword>
<keyword id="KW-1185">Reference proteome</keyword>
<keyword id="KW-0677">Repeat</keyword>
<keyword id="KW-0747">Spliceosome</keyword>
<proteinExistence type="evidence at protein level"/>
<sequence>MSLKMDNRDVAGKANRWFGMAQPKSGKMNMNILHQEELIAQKKREIEARMEQKARQSHVPSPQPPHPGEIADAHNSCISNKFANDGSFLQQFLKLQKAQTSTDSAPRAPPSMPTPSSLKKPLVLSKRTGLGLSSPTGPVKNYSHAKQLPVAHRPSVFQSPDDDEEEDYEQWLEIKVSPPEGAETRRVIEKLARFVAEGGPELEKVAMEDYKDNPAFTFLHDKNSREFLYYRRKVAEIRKEAQKPQAATQKVSPPEDEEAKNLAEKLARFIADGGPEVETIALQNNRENQAFSFLYDPNSQGYRYYRQKLDEFRKAKAGSTGSFPAPAPNPSLRRKSAPEALSGAVPPITACPTPVAPAPAVNPTPSIPGKPTATAAVKRKRKSRWGPEEDKVELPPAELAQRDIDASPSPLSVQDLKGLGYEKGKPVGLVGVTELSDAQKKQLKEQQEMQQMYDMIMQHKRAMQDMQLLWEKALQQHQHGYDSDEEVDSELGTWEHQLRRMEMDKTREWAEQLTQMGRGKHFIGDFLPPDELEKFMETFKALKEGREPDYSEYKEFKLTVENIGYQMLMKMGWKEGEGLGTEGQGIKNPVNKGATTIDGAGFGIDRPAELSKEDDEYEAFRKRMMLAYRFRPNPLNNPRRPYY</sequence>
<feature type="chain" id="PRO_0000097702" description="SURP and G-patch domain-containing protein 1">
    <location>
        <begin position="1"/>
        <end position="643"/>
    </location>
</feature>
<feature type="repeat" description="SURP motif 1">
    <location>
        <begin position="187"/>
        <end position="229"/>
    </location>
</feature>
<feature type="repeat" description="SURP motif 2">
    <location>
        <begin position="262"/>
        <end position="305"/>
    </location>
</feature>
<feature type="domain" description="G-patch" evidence="4">
    <location>
        <begin position="560"/>
        <end position="607"/>
    </location>
</feature>
<feature type="region of interest" description="Disordered" evidence="5">
    <location>
        <begin position="48"/>
        <end position="69"/>
    </location>
</feature>
<feature type="region of interest" description="Disordered" evidence="5">
    <location>
        <begin position="97"/>
        <end position="119"/>
    </location>
</feature>
<feature type="region of interest" description="Disordered" evidence="5">
    <location>
        <begin position="316"/>
        <end position="335"/>
    </location>
</feature>
<feature type="region of interest" description="Disordered" evidence="5">
    <location>
        <begin position="360"/>
        <end position="393"/>
    </location>
</feature>
<feature type="short sequence motif" description="Nuclear localization signal" evidence="3">
    <location>
        <begin position="378"/>
        <end position="384"/>
    </location>
</feature>
<feature type="modified residue" description="Phosphothreonine" evidence="2">
    <location>
        <position position="128"/>
    </location>
</feature>
<feature type="modified residue" description="Phosphoserine" evidence="2">
    <location>
        <position position="252"/>
    </location>
</feature>
<feature type="modified residue" description="Phosphoserine" evidence="2">
    <location>
        <position position="322"/>
    </location>
</feature>
<feature type="modified residue" description="Phosphoserine" evidence="8">
    <location>
        <position position="407"/>
    </location>
</feature>
<feature type="modified residue" description="Phosphoserine" evidence="8">
    <location>
        <position position="409"/>
    </location>
</feature>
<feature type="modified residue" description="Phosphoserine" evidence="2">
    <location>
        <position position="412"/>
    </location>
</feature>
<feature type="modified residue" description="Phosphoserine" evidence="7 8">
    <location>
        <position position="483"/>
    </location>
</feature>
<feature type="sequence conflict" description="In Ref. 3; AAI20920/AAI20921." evidence="6" ref="3">
    <original>P</original>
    <variation>L</variation>
    <location>
        <position position="326"/>
    </location>
</feature>
<feature type="helix" evidence="9">
    <location>
        <begin position="167"/>
        <end position="172"/>
    </location>
</feature>
<feature type="helix" evidence="9">
    <location>
        <begin position="179"/>
        <end position="181"/>
    </location>
</feature>
<feature type="helix" evidence="9">
    <location>
        <begin position="182"/>
        <end position="198"/>
    </location>
</feature>
<feature type="helix" evidence="9">
    <location>
        <begin position="200"/>
        <end position="209"/>
    </location>
</feature>
<feature type="turn" evidence="9">
    <location>
        <begin position="210"/>
        <end position="212"/>
    </location>
</feature>
<feature type="strand" evidence="9">
    <location>
        <begin position="214"/>
        <end position="216"/>
    </location>
</feature>
<feature type="helix" evidence="9">
    <location>
        <begin position="217"/>
        <end position="220"/>
    </location>
</feature>
<feature type="helix" evidence="9">
    <location>
        <begin position="225"/>
        <end position="239"/>
    </location>
</feature>
<feature type="helix" evidence="10">
    <location>
        <begin position="257"/>
        <end position="272"/>
    </location>
</feature>
<feature type="helix" evidence="10">
    <location>
        <begin position="277"/>
        <end position="287"/>
    </location>
</feature>
<feature type="turn" evidence="10">
    <location>
        <begin position="291"/>
        <end position="295"/>
    </location>
</feature>
<feature type="strand" evidence="10">
    <location>
        <begin position="297"/>
        <end position="300"/>
    </location>
</feature>
<feature type="helix" evidence="10">
    <location>
        <begin position="301"/>
        <end position="313"/>
    </location>
</feature>
<dbReference type="EMBL" id="AF521129">
    <property type="protein sequence ID" value="AAN77124.1"/>
    <property type="molecule type" value="mRNA"/>
</dbReference>
<dbReference type="EMBL" id="AK156508">
    <property type="protein sequence ID" value="BAE33738.1"/>
    <property type="molecule type" value="mRNA"/>
</dbReference>
<dbReference type="EMBL" id="BC120919">
    <property type="protein sequence ID" value="AAI20920.1"/>
    <property type="molecule type" value="mRNA"/>
</dbReference>
<dbReference type="EMBL" id="BC120920">
    <property type="protein sequence ID" value="AAI20921.1"/>
    <property type="molecule type" value="mRNA"/>
</dbReference>
<dbReference type="CCDS" id="CCDS22356.1"/>
<dbReference type="RefSeq" id="NP_001355320.1">
    <property type="nucleotide sequence ID" value="NM_001368391.1"/>
</dbReference>
<dbReference type="RefSeq" id="NP_081757.1">
    <property type="nucleotide sequence ID" value="NM_027481.3"/>
</dbReference>
<dbReference type="RefSeq" id="XP_006509801.1">
    <property type="nucleotide sequence ID" value="XM_006509738.1"/>
</dbReference>
<dbReference type="PDB" id="1UG0">
    <property type="method" value="NMR"/>
    <property type="chains" value="A=165-239"/>
</dbReference>
<dbReference type="PDB" id="1X4O">
    <property type="method" value="NMR"/>
    <property type="chains" value="A=250-314"/>
</dbReference>
<dbReference type="PDBsum" id="1UG0"/>
<dbReference type="PDBsum" id="1X4O"/>
<dbReference type="SMR" id="Q8CH02"/>
<dbReference type="BioGRID" id="214168">
    <property type="interactions" value="4"/>
</dbReference>
<dbReference type="FunCoup" id="Q8CH02">
    <property type="interactions" value="3019"/>
</dbReference>
<dbReference type="IntAct" id="Q8CH02">
    <property type="interactions" value="1"/>
</dbReference>
<dbReference type="STRING" id="10090.ENSMUSP00000011450"/>
<dbReference type="GlyGen" id="Q8CH02">
    <property type="glycosylation" value="3 sites, 1 O-linked glycan (1 site)"/>
</dbReference>
<dbReference type="iPTMnet" id="Q8CH02"/>
<dbReference type="PhosphoSitePlus" id="Q8CH02"/>
<dbReference type="SwissPalm" id="Q8CH02"/>
<dbReference type="jPOST" id="Q8CH02"/>
<dbReference type="PaxDb" id="10090-ENSMUSP00000011450"/>
<dbReference type="PeptideAtlas" id="Q8CH02"/>
<dbReference type="ProteomicsDB" id="257374"/>
<dbReference type="Pumba" id="Q8CH02"/>
<dbReference type="Antibodypedia" id="1687">
    <property type="antibodies" value="157 antibodies from 26 providers"/>
</dbReference>
<dbReference type="DNASU" id="70616"/>
<dbReference type="Ensembl" id="ENSMUST00000011450.8">
    <property type="protein sequence ID" value="ENSMUSP00000011450.7"/>
    <property type="gene ID" value="ENSMUSG00000011306.8"/>
</dbReference>
<dbReference type="GeneID" id="70616"/>
<dbReference type="KEGG" id="mmu:70616"/>
<dbReference type="UCSC" id="uc009lyn.1">
    <property type="organism name" value="mouse"/>
</dbReference>
<dbReference type="AGR" id="MGI:1917866"/>
<dbReference type="CTD" id="57794"/>
<dbReference type="MGI" id="MGI:1917866">
    <property type="gene designation" value="Sugp1"/>
</dbReference>
<dbReference type="VEuPathDB" id="HostDB:ENSMUSG00000011306"/>
<dbReference type="eggNOG" id="KOG0965">
    <property type="taxonomic scope" value="Eukaryota"/>
</dbReference>
<dbReference type="GeneTree" id="ENSGT00410000025695"/>
<dbReference type="HOGENOM" id="CLU_028403_0_0_1"/>
<dbReference type="InParanoid" id="Q8CH02"/>
<dbReference type="OMA" id="QIMWERT"/>
<dbReference type="OrthoDB" id="4822at2759"/>
<dbReference type="PhylomeDB" id="Q8CH02"/>
<dbReference type="TreeFam" id="TF326321"/>
<dbReference type="Reactome" id="R-MMU-72163">
    <property type="pathway name" value="mRNA Splicing - Major Pathway"/>
</dbReference>
<dbReference type="BioGRID-ORCS" id="70616">
    <property type="hits" value="6 hits in 77 CRISPR screens"/>
</dbReference>
<dbReference type="EvolutionaryTrace" id="Q8CH02"/>
<dbReference type="PRO" id="PR:Q8CH02"/>
<dbReference type="Proteomes" id="UP000000589">
    <property type="component" value="Chromosome 8"/>
</dbReference>
<dbReference type="RNAct" id="Q8CH02">
    <property type="molecule type" value="protein"/>
</dbReference>
<dbReference type="Bgee" id="ENSMUSG00000011306">
    <property type="expression patterns" value="Expressed in seminiferous tubule of testis and 252 other cell types or tissues"/>
</dbReference>
<dbReference type="GO" id="GO:0005654">
    <property type="term" value="C:nucleoplasm"/>
    <property type="evidence" value="ECO:0007669"/>
    <property type="project" value="Ensembl"/>
</dbReference>
<dbReference type="GO" id="GO:0005681">
    <property type="term" value="C:spliceosomal complex"/>
    <property type="evidence" value="ECO:0007669"/>
    <property type="project" value="UniProtKB-KW"/>
</dbReference>
<dbReference type="GO" id="GO:0003729">
    <property type="term" value="F:mRNA binding"/>
    <property type="evidence" value="ECO:0000314"/>
    <property type="project" value="MGI"/>
</dbReference>
<dbReference type="GO" id="GO:0006397">
    <property type="term" value="P:mRNA processing"/>
    <property type="evidence" value="ECO:0007669"/>
    <property type="project" value="UniProtKB-KW"/>
</dbReference>
<dbReference type="GO" id="GO:0008380">
    <property type="term" value="P:RNA splicing"/>
    <property type="evidence" value="ECO:0007669"/>
    <property type="project" value="UniProtKB-KW"/>
</dbReference>
<dbReference type="FunFam" id="1.10.10.790:FF:000004">
    <property type="entry name" value="SURP and G-patch domain-containing protein 1"/>
    <property type="match status" value="1"/>
</dbReference>
<dbReference type="Gene3D" id="1.10.10.790">
    <property type="entry name" value="Surp module"/>
    <property type="match status" value="2"/>
</dbReference>
<dbReference type="InterPro" id="IPR000467">
    <property type="entry name" value="G_patch_dom"/>
</dbReference>
<dbReference type="InterPro" id="IPR040169">
    <property type="entry name" value="SUGP1/2"/>
</dbReference>
<dbReference type="InterPro" id="IPR000061">
    <property type="entry name" value="Surp"/>
</dbReference>
<dbReference type="InterPro" id="IPR035967">
    <property type="entry name" value="SWAP/Surp_sf"/>
</dbReference>
<dbReference type="PANTHER" id="PTHR23340">
    <property type="entry name" value="ARGININE/SERINE RICH SPLICING FACTOR SF4/14"/>
    <property type="match status" value="1"/>
</dbReference>
<dbReference type="PANTHER" id="PTHR23340:SF3">
    <property type="entry name" value="SURP AND G-PATCH DOMAIN-CONTAINING PROTEIN 1"/>
    <property type="match status" value="1"/>
</dbReference>
<dbReference type="Pfam" id="PF01585">
    <property type="entry name" value="G-patch"/>
    <property type="match status" value="1"/>
</dbReference>
<dbReference type="Pfam" id="PF01805">
    <property type="entry name" value="Surp"/>
    <property type="match status" value="2"/>
</dbReference>
<dbReference type="SMART" id="SM00443">
    <property type="entry name" value="G_patch"/>
    <property type="match status" value="1"/>
</dbReference>
<dbReference type="SMART" id="SM00648">
    <property type="entry name" value="SWAP"/>
    <property type="match status" value="2"/>
</dbReference>
<dbReference type="SUPFAM" id="SSF109905">
    <property type="entry name" value="Surp module (SWAP domain)"/>
    <property type="match status" value="2"/>
</dbReference>
<dbReference type="PROSITE" id="PS50174">
    <property type="entry name" value="G_PATCH"/>
    <property type="match status" value="1"/>
</dbReference>
<dbReference type="PROSITE" id="PS50128">
    <property type="entry name" value="SURP"/>
    <property type="match status" value="2"/>
</dbReference>